<name>MTB1_NEIGO</name>
<dbReference type="EC" id="2.1.1.37"/>
<dbReference type="EMBL" id="U42459">
    <property type="protein sequence ID" value="AAB03206.2"/>
    <property type="molecule type" value="Genomic_DNA"/>
</dbReference>
<dbReference type="SMR" id="Q59603"/>
<dbReference type="REBASE" id="3607">
    <property type="entry name" value="M.NgoBI"/>
</dbReference>
<dbReference type="PRO" id="PR:Q59603"/>
<dbReference type="GO" id="GO:0003886">
    <property type="term" value="F:DNA (cytosine-5-)-methyltransferase activity"/>
    <property type="evidence" value="ECO:0007669"/>
    <property type="project" value="UniProtKB-EC"/>
</dbReference>
<dbReference type="GO" id="GO:0003677">
    <property type="term" value="F:DNA binding"/>
    <property type="evidence" value="ECO:0007669"/>
    <property type="project" value="UniProtKB-KW"/>
</dbReference>
<dbReference type="GO" id="GO:0009307">
    <property type="term" value="P:DNA restriction-modification system"/>
    <property type="evidence" value="ECO:0007669"/>
    <property type="project" value="UniProtKB-KW"/>
</dbReference>
<dbReference type="GO" id="GO:0032259">
    <property type="term" value="P:methylation"/>
    <property type="evidence" value="ECO:0007669"/>
    <property type="project" value="UniProtKB-KW"/>
</dbReference>
<dbReference type="CDD" id="cd00315">
    <property type="entry name" value="Cyt_C5_DNA_methylase"/>
    <property type="match status" value="1"/>
</dbReference>
<dbReference type="Gene3D" id="3.90.120.10">
    <property type="entry name" value="DNA Methylase, subunit A, domain 2"/>
    <property type="match status" value="1"/>
</dbReference>
<dbReference type="Gene3D" id="3.40.50.150">
    <property type="entry name" value="Vaccinia Virus protein VP39"/>
    <property type="match status" value="1"/>
</dbReference>
<dbReference type="InterPro" id="IPR050750">
    <property type="entry name" value="C5-MTase"/>
</dbReference>
<dbReference type="InterPro" id="IPR018117">
    <property type="entry name" value="C5_DNA_meth_AS"/>
</dbReference>
<dbReference type="InterPro" id="IPR001525">
    <property type="entry name" value="C5_MeTfrase"/>
</dbReference>
<dbReference type="InterPro" id="IPR029063">
    <property type="entry name" value="SAM-dependent_MTases_sf"/>
</dbReference>
<dbReference type="NCBIfam" id="TIGR00675">
    <property type="entry name" value="dcm"/>
    <property type="match status" value="1"/>
</dbReference>
<dbReference type="PANTHER" id="PTHR46098">
    <property type="entry name" value="TRNA (CYTOSINE(38)-C(5))-METHYLTRANSFERASE"/>
    <property type="match status" value="1"/>
</dbReference>
<dbReference type="PANTHER" id="PTHR46098:SF1">
    <property type="entry name" value="TRNA (CYTOSINE(38)-C(5))-METHYLTRANSFERASE"/>
    <property type="match status" value="1"/>
</dbReference>
<dbReference type="Pfam" id="PF00145">
    <property type="entry name" value="DNA_methylase"/>
    <property type="match status" value="1"/>
</dbReference>
<dbReference type="PRINTS" id="PR00105">
    <property type="entry name" value="C5METTRFRASE"/>
</dbReference>
<dbReference type="SUPFAM" id="SSF53335">
    <property type="entry name" value="S-adenosyl-L-methionine-dependent methyltransferases"/>
    <property type="match status" value="1"/>
</dbReference>
<dbReference type="PROSITE" id="PS00094">
    <property type="entry name" value="C5_MTASE_1"/>
    <property type="match status" value="1"/>
</dbReference>
<dbReference type="PROSITE" id="PS51679">
    <property type="entry name" value="SAM_MT_C5"/>
    <property type="match status" value="1"/>
</dbReference>
<comment type="function">
    <text evidence="3 4 6">A methylase, recognizes the double-stranded sequence 5'-RGCGCY-3', methylates C-5 on both strands, and protects the DNA from cleavage by the NgoBI endonuclease.</text>
</comment>
<comment type="catalytic activity">
    <reaction evidence="2">
        <text>a 2'-deoxycytidine in DNA + S-adenosyl-L-methionine = a 5-methyl-2'-deoxycytidine in DNA + S-adenosyl-L-homocysteine + H(+)</text>
        <dbReference type="Rhea" id="RHEA:13681"/>
        <dbReference type="Rhea" id="RHEA-COMP:11369"/>
        <dbReference type="Rhea" id="RHEA-COMP:11370"/>
        <dbReference type="ChEBI" id="CHEBI:15378"/>
        <dbReference type="ChEBI" id="CHEBI:57856"/>
        <dbReference type="ChEBI" id="CHEBI:59789"/>
        <dbReference type="ChEBI" id="CHEBI:85452"/>
        <dbReference type="ChEBI" id="CHEBI:85454"/>
        <dbReference type="EC" id="2.1.1.37"/>
    </reaction>
</comment>
<comment type="similarity">
    <text evidence="1">Belongs to the class I-like SAM-binding methyltransferase superfamily. C5-methyltransferase family.</text>
</comment>
<evidence type="ECO:0000255" key="1">
    <source>
        <dbReference type="PROSITE-ProRule" id="PRU01016"/>
    </source>
</evidence>
<evidence type="ECO:0000255" key="2">
    <source>
        <dbReference type="PROSITE-ProRule" id="PRU10018"/>
    </source>
</evidence>
<evidence type="ECO:0000269" key="3">
    <source>
    </source>
</evidence>
<evidence type="ECO:0000303" key="4">
    <source>
    </source>
</evidence>
<evidence type="ECO:0000303" key="5">
    <source>
    </source>
</evidence>
<evidence type="ECO:0000305" key="6">
    <source>
    </source>
</evidence>
<sequence>MYKTIDLFSGIGGIRLGFEKYGCTNVFSSEWDKYARQVYEANFGEKPFGDINGIDPSDIPDHDILLAGFPCQPFSIAGKGLGFEDTRGTLFFNIAEILKTKQPKAFLLENVKRLTTHDSGRTFRIVLETLKQLGYTVYFKVLNTLDFGLPQKRERIYIVGFSDNIPFYFPEPINQYRPLGELLENDRDVEPSYFLSDTLKQKRLAALKKAPPTPSIWHENIGGNVSALPYSCALRAGGSYNYLVVNGVRRLTGREMLRLQGFPDDFEINIPYSQVRKVAGNSVSVPVIEATRKICSLLFPARSNKKGNWIYWRQDDA</sequence>
<keyword id="KW-0238">DNA-binding</keyword>
<keyword id="KW-0489">Methyltransferase</keyword>
<keyword id="KW-0680">Restriction system</keyword>
<keyword id="KW-0949">S-adenosyl-L-methionine</keyword>
<keyword id="KW-0808">Transferase</keyword>
<organism>
    <name type="scientific">Neisseria gonorrhoeae</name>
    <dbReference type="NCBI Taxonomy" id="485"/>
    <lineage>
        <taxon>Bacteria</taxon>
        <taxon>Pseudomonadati</taxon>
        <taxon>Pseudomonadota</taxon>
        <taxon>Betaproteobacteria</taxon>
        <taxon>Neisseriales</taxon>
        <taxon>Neisseriaceae</taxon>
        <taxon>Neisseria</taxon>
    </lineage>
</organism>
<accession>Q59603</accession>
<feature type="chain" id="PRO_0000087896" description="Type II methyltransferase M.NgoBI">
    <location>
        <begin position="1"/>
        <end position="317"/>
    </location>
</feature>
<feature type="domain" description="SAM-dependent MTase C5-type" evidence="1">
    <location>
        <begin position="2"/>
        <end position="302"/>
    </location>
</feature>
<feature type="active site" evidence="1 2">
    <location>
        <position position="71"/>
    </location>
</feature>
<proteinExistence type="inferred from homology"/>
<reference key="1">
    <citation type="journal article" date="1998" name="Biol. Chem.">
        <title>Sequence similarities between the genes encoding the S.NgoI and HaeII restriction/modification systems.</title>
        <authorList>
            <person name="Stein D.C."/>
            <person name="Gunn J.S."/>
            <person name="Piekarowicz A."/>
        </authorList>
    </citation>
    <scope>NUCLEOTIDE SEQUENCE [GENOMIC DNA]</scope>
    <scope>FUNCTION</scope>
    <source>
        <strain>WR302</strain>
    </source>
</reference>
<reference key="2">
    <citation type="journal article" date="1995" name="Gene">
        <title>Restriction and modification systems of Neisseria gonorrhoeae.</title>
        <authorList>
            <person name="Stein D.C."/>
            <person name="Gunn J.S."/>
            <person name="Radlinska M."/>
            <person name="Piekarowicz A."/>
        </authorList>
    </citation>
    <scope>FUNCTION</scope>
    <source>
        <strain>WR302</strain>
    </source>
</reference>
<reference key="3">
    <citation type="journal article" date="2003" name="Nucleic Acids Res.">
        <title>A nomenclature for restriction enzymes, DNA methyltransferases, homing endonucleases and their genes.</title>
        <authorList>
            <person name="Roberts R.J."/>
            <person name="Belfort M."/>
            <person name="Bestor T."/>
            <person name="Bhagwat A.S."/>
            <person name="Bickle T.A."/>
            <person name="Bitinaite J."/>
            <person name="Blumenthal R.M."/>
            <person name="Degtyarev S.K."/>
            <person name="Dryden D.T."/>
            <person name="Dybvig K."/>
            <person name="Firman K."/>
            <person name="Gromova E.S."/>
            <person name="Gumport R.I."/>
            <person name="Halford S.E."/>
            <person name="Hattman S."/>
            <person name="Heitman J."/>
            <person name="Hornby D.P."/>
            <person name="Janulaitis A."/>
            <person name="Jeltsch A."/>
            <person name="Josephsen J."/>
            <person name="Kiss A."/>
            <person name="Klaenhammer T.R."/>
            <person name="Kobayashi I."/>
            <person name="Kong H."/>
            <person name="Krueger D.H."/>
            <person name="Lacks S."/>
            <person name="Marinus M.G."/>
            <person name="Miyahara M."/>
            <person name="Morgan R.D."/>
            <person name="Murray N.E."/>
            <person name="Nagaraja V."/>
            <person name="Piekarowicz A."/>
            <person name="Pingoud A."/>
            <person name="Raleigh E."/>
            <person name="Rao D.N."/>
            <person name="Reich N."/>
            <person name="Repin V.E."/>
            <person name="Selker E.U."/>
            <person name="Shaw P.C."/>
            <person name="Stein D.C."/>
            <person name="Stoddard B.L."/>
            <person name="Szybalski W."/>
            <person name="Trautner T.A."/>
            <person name="Van Etten J.L."/>
            <person name="Vitor J.M."/>
            <person name="Wilson G.G."/>
            <person name="Xu S.Y."/>
        </authorList>
    </citation>
    <scope>NOMENCLATURE</scope>
</reference>
<protein>
    <recommendedName>
        <fullName evidence="4">Type II methyltransferase M.NgoBI</fullName>
        <shortName evidence="4">M.NgoBI</shortName>
        <ecNumber>2.1.1.37</ecNumber>
    </recommendedName>
    <alternativeName>
        <fullName>Cytosine-specific methyltransferase NgoBI</fullName>
        <shortName evidence="5">M.NgoI</shortName>
    </alternativeName>
    <alternativeName>
        <fullName>Modification methylase NgoBI</fullName>
    </alternativeName>
</protein>
<gene>
    <name type="primary">ngoBIM</name>
</gene>